<comment type="function">
    <text>Catalyzes the synthesis of mevalonate. The specific precursor of all isoprenoid compounds present in plants.</text>
</comment>
<comment type="catalytic activity">
    <reaction evidence="3">
        <text>(R)-mevalonate + 2 NADP(+) + CoA = (3S)-3-hydroxy-3-methylglutaryl-CoA + 2 NADPH + 2 H(+)</text>
        <dbReference type="Rhea" id="RHEA:15989"/>
        <dbReference type="ChEBI" id="CHEBI:15378"/>
        <dbReference type="ChEBI" id="CHEBI:36464"/>
        <dbReference type="ChEBI" id="CHEBI:43074"/>
        <dbReference type="ChEBI" id="CHEBI:57287"/>
        <dbReference type="ChEBI" id="CHEBI:57783"/>
        <dbReference type="ChEBI" id="CHEBI:58349"/>
        <dbReference type="EC" id="1.1.1.34"/>
    </reaction>
</comment>
<comment type="pathway">
    <text>Metabolic intermediate biosynthesis; (R)-mevalonate biosynthesis; (R)-mevalonate from acetyl-CoA: step 3/3.</text>
</comment>
<comment type="subcellular location">
    <subcellularLocation>
        <location>Endoplasmic reticulum membrane</location>
        <topology>Multi-pass membrane protein</topology>
    </subcellularLocation>
</comment>
<comment type="similarity">
    <text evidence="5">Belongs to the HMG-CoA reductase family.</text>
</comment>
<name>HMDH_CATRO</name>
<dbReference type="EC" id="1.1.1.34"/>
<dbReference type="EMBL" id="M96068">
    <property type="protein sequence ID" value="AAA33108.1"/>
    <property type="molecule type" value="mRNA"/>
</dbReference>
<dbReference type="PIR" id="T09967">
    <property type="entry name" value="T09967"/>
</dbReference>
<dbReference type="SMR" id="Q03163"/>
<dbReference type="GlyCosmos" id="Q03163">
    <property type="glycosylation" value="2 sites, No reported glycans"/>
</dbReference>
<dbReference type="UniPathway" id="UPA00058">
    <property type="reaction ID" value="UER00103"/>
</dbReference>
<dbReference type="GO" id="GO:0005789">
    <property type="term" value="C:endoplasmic reticulum membrane"/>
    <property type="evidence" value="ECO:0007669"/>
    <property type="project" value="UniProtKB-SubCell"/>
</dbReference>
<dbReference type="GO" id="GO:0005778">
    <property type="term" value="C:peroxisomal membrane"/>
    <property type="evidence" value="ECO:0007669"/>
    <property type="project" value="TreeGrafter"/>
</dbReference>
<dbReference type="GO" id="GO:0004420">
    <property type="term" value="F:hydroxymethylglutaryl-CoA reductase (NADPH) activity"/>
    <property type="evidence" value="ECO:0007669"/>
    <property type="project" value="UniProtKB-EC"/>
</dbReference>
<dbReference type="GO" id="GO:0015936">
    <property type="term" value="P:coenzyme A metabolic process"/>
    <property type="evidence" value="ECO:0007669"/>
    <property type="project" value="InterPro"/>
</dbReference>
<dbReference type="GO" id="GO:0008299">
    <property type="term" value="P:isoprenoid biosynthetic process"/>
    <property type="evidence" value="ECO:0007669"/>
    <property type="project" value="UniProtKB-KW"/>
</dbReference>
<dbReference type="GO" id="GO:0016126">
    <property type="term" value="P:sterol biosynthetic process"/>
    <property type="evidence" value="ECO:0007669"/>
    <property type="project" value="TreeGrafter"/>
</dbReference>
<dbReference type="CDD" id="cd00643">
    <property type="entry name" value="HMG-CoA_reductase_classI"/>
    <property type="match status" value="1"/>
</dbReference>
<dbReference type="FunFam" id="1.10.3270.10:FF:000002">
    <property type="entry name" value="3-hydroxy-3-methylglutaryl coenzyme A reductase"/>
    <property type="match status" value="1"/>
</dbReference>
<dbReference type="FunFam" id="3.30.70.420:FF:000001">
    <property type="entry name" value="3-hydroxy-3-methylglutaryl coenzyme A reductase"/>
    <property type="match status" value="1"/>
</dbReference>
<dbReference type="FunFam" id="3.90.770.10:FF:000001">
    <property type="entry name" value="3-hydroxy-3-methylglutaryl coenzyme A reductase"/>
    <property type="match status" value="1"/>
</dbReference>
<dbReference type="Gene3D" id="3.90.770.10">
    <property type="entry name" value="3-hydroxy-3-methylglutaryl-coenzyme A Reductase, Chain A, domain 2"/>
    <property type="match status" value="1"/>
</dbReference>
<dbReference type="Gene3D" id="1.10.3270.10">
    <property type="entry name" value="HMGR, N-terminal domain"/>
    <property type="match status" value="1"/>
</dbReference>
<dbReference type="Gene3D" id="3.30.70.420">
    <property type="entry name" value="Hydroxymethylglutaryl-CoA reductase, class I/II, NAD/NADP-binding domain"/>
    <property type="match status" value="1"/>
</dbReference>
<dbReference type="InterPro" id="IPR002202">
    <property type="entry name" value="HMG_CoA_Rdtase"/>
</dbReference>
<dbReference type="InterPro" id="IPR023074">
    <property type="entry name" value="HMG_CoA_Rdtase_cat_sf"/>
</dbReference>
<dbReference type="InterPro" id="IPR023076">
    <property type="entry name" value="HMG_CoA_Rdtase_CS"/>
</dbReference>
<dbReference type="InterPro" id="IPR004554">
    <property type="entry name" value="HMG_CoA_Rdtase_eu_arc"/>
</dbReference>
<dbReference type="InterPro" id="IPR023282">
    <property type="entry name" value="HMG_CoA_Rdtase_N"/>
</dbReference>
<dbReference type="InterPro" id="IPR009023">
    <property type="entry name" value="HMG_CoA_Rdtase_NAD(P)-bd_sf"/>
</dbReference>
<dbReference type="InterPro" id="IPR009029">
    <property type="entry name" value="HMG_CoA_Rdtase_sub-bd_dom_sf"/>
</dbReference>
<dbReference type="NCBIfam" id="TIGR00533">
    <property type="entry name" value="HMG_CoA_R_NADP"/>
    <property type="match status" value="1"/>
</dbReference>
<dbReference type="PANTHER" id="PTHR10572">
    <property type="entry name" value="3-HYDROXY-3-METHYLGLUTARYL-COENZYME A REDUCTASE"/>
    <property type="match status" value="1"/>
</dbReference>
<dbReference type="PANTHER" id="PTHR10572:SF56">
    <property type="entry name" value="3-HYDROXY-3-METHYLGLUTARYL-COENZYME A REDUCTASE 1"/>
    <property type="match status" value="1"/>
</dbReference>
<dbReference type="Pfam" id="PF00368">
    <property type="entry name" value="HMG-CoA_red"/>
    <property type="match status" value="1"/>
</dbReference>
<dbReference type="PRINTS" id="PR00071">
    <property type="entry name" value="HMGCOARDTASE"/>
</dbReference>
<dbReference type="SUPFAM" id="SSF55035">
    <property type="entry name" value="NAD-binding domain of HMG-CoA reductase"/>
    <property type="match status" value="1"/>
</dbReference>
<dbReference type="SUPFAM" id="SSF56542">
    <property type="entry name" value="Substrate-binding domain of HMG-CoA reductase"/>
    <property type="match status" value="1"/>
</dbReference>
<dbReference type="PROSITE" id="PS00066">
    <property type="entry name" value="HMG_COA_REDUCTASE_1"/>
    <property type="match status" value="1"/>
</dbReference>
<dbReference type="PROSITE" id="PS00318">
    <property type="entry name" value="HMG_COA_REDUCTASE_2"/>
    <property type="match status" value="1"/>
</dbReference>
<dbReference type="PROSITE" id="PS01192">
    <property type="entry name" value="HMG_COA_REDUCTASE_3"/>
    <property type="match status" value="1"/>
</dbReference>
<dbReference type="PROSITE" id="PS50065">
    <property type="entry name" value="HMG_COA_REDUCTASE_4"/>
    <property type="match status" value="1"/>
</dbReference>
<reference key="1">
    <citation type="journal article" date="1992" name="Plant Physiol.">
        <title>Nucleotide sequence of a cDNA encoding 3-hydroxy-3-methylglutaryl-CoA reductase from Catharanthus roseus.</title>
        <authorList>
            <person name="Maldenado-Mendoza I.E."/>
            <person name="Burnett R.J."/>
            <person name="Nessler C.L."/>
        </authorList>
    </citation>
    <scope>NUCLEOTIDE SEQUENCE [MRNA]</scope>
    <source>
        <strain>cv. Little Delicata</strain>
        <tissue>Seedling</tissue>
    </source>
</reference>
<proteinExistence type="evidence at transcript level"/>
<evidence type="ECO:0000250" key="1"/>
<evidence type="ECO:0000255" key="2"/>
<evidence type="ECO:0000255" key="3">
    <source>
        <dbReference type="PROSITE-ProRule" id="PRU10003"/>
    </source>
</evidence>
<evidence type="ECO:0000256" key="4">
    <source>
        <dbReference type="SAM" id="MobiDB-lite"/>
    </source>
</evidence>
<evidence type="ECO:0000305" key="5"/>
<accession>Q03163</accession>
<keyword id="KW-0256">Endoplasmic reticulum</keyword>
<keyword id="KW-0325">Glycoprotein</keyword>
<keyword id="KW-0414">Isoprene biosynthesis</keyword>
<keyword id="KW-0472">Membrane</keyword>
<keyword id="KW-0521">NADP</keyword>
<keyword id="KW-0560">Oxidoreductase</keyword>
<keyword id="KW-0812">Transmembrane</keyword>
<keyword id="KW-1133">Transmembrane helix</keyword>
<protein>
    <recommendedName>
        <fullName>3-hydroxy-3-methylglutaryl-coenzyme A reductase</fullName>
        <shortName>HMG-CoA reductase</shortName>
        <ecNumber>1.1.1.34</ecNumber>
    </recommendedName>
</protein>
<organism>
    <name type="scientific">Catharanthus roseus</name>
    <name type="common">Madagascar periwinkle</name>
    <name type="synonym">Vinca rosea</name>
    <dbReference type="NCBI Taxonomy" id="4058"/>
    <lineage>
        <taxon>Eukaryota</taxon>
        <taxon>Viridiplantae</taxon>
        <taxon>Streptophyta</taxon>
        <taxon>Embryophyta</taxon>
        <taxon>Tracheophyta</taxon>
        <taxon>Spermatophyta</taxon>
        <taxon>Magnoliopsida</taxon>
        <taxon>eudicotyledons</taxon>
        <taxon>Gunneridae</taxon>
        <taxon>Pentapetalae</taxon>
        <taxon>asterids</taxon>
        <taxon>lamiids</taxon>
        <taxon>Gentianales</taxon>
        <taxon>Apocynaceae</taxon>
        <taxon>Rauvolfioideae</taxon>
        <taxon>Vinceae</taxon>
        <taxon>Catharanthinae</taxon>
        <taxon>Catharanthus</taxon>
    </lineage>
</organism>
<feature type="chain" id="PRO_0000114437" description="3-hydroxy-3-methylglutaryl-coenzyme A reductase">
    <location>
        <begin position="1"/>
        <end position="601"/>
    </location>
</feature>
<feature type="transmembrane region" description="Helical" evidence="2">
    <location>
        <begin position="36"/>
        <end position="58"/>
    </location>
</feature>
<feature type="transmembrane region" description="Helical" evidence="2">
    <location>
        <begin position="86"/>
        <end position="106"/>
    </location>
</feature>
<feature type="region of interest" description="Disordered" evidence="4">
    <location>
        <begin position="1"/>
        <end position="34"/>
    </location>
</feature>
<feature type="region of interest" description="Linker" evidence="1">
    <location>
        <begin position="107"/>
        <end position="179"/>
    </location>
</feature>
<feature type="region of interest" description="Catalytic" evidence="1">
    <location>
        <begin position="180"/>
        <end position="601"/>
    </location>
</feature>
<feature type="active site" description="Charge relay system" evidence="1">
    <location>
        <position position="273"/>
    </location>
</feature>
<feature type="active site" description="Charge relay system" evidence="1">
    <location>
        <position position="405"/>
    </location>
</feature>
<feature type="active site" description="Charge relay system" evidence="1">
    <location>
        <position position="481"/>
    </location>
</feature>
<feature type="active site" description="Proton donor" evidence="3">
    <location>
        <position position="579"/>
    </location>
</feature>
<feature type="glycosylation site" description="N-linked (GlcNAc...) asparagine" evidence="2">
    <location>
        <position position="337"/>
    </location>
</feature>
<feature type="glycosylation site" description="N-linked (GlcNAc...) asparagine" evidence="2">
    <location>
        <position position="583"/>
    </location>
</feature>
<sequence>MDSRRRSPTVTAKAAAGELPLAPHEGQNQQPSIPRSSDVLPLPLYLANGVFFTLFFSVMYFLLTRWREKIRNATPLHVVTLSELAALASLIASVIYLVSFFGLDFVQSLIYKPNNEGWEIEEEILMVEDSRNGTNCTTLGCAVPPPSVPKIAPVVPQQPSKMVIIEKPAPLITPQNSEEDEDIIKAVVAGKIPSYSLESKLGDCKRAAGIRREALQRITGKSLEGLPLEGFDYASILGQCCEMPVGYVQLPVGIAGPLLLDGREYMLPMATTEGCLVASTNRGCKAILASGGANSVLLRDGMTRAPVVRFGTAKRAAELKFYMEDTQNFETISVVFNKSSRFAKLQSVQCAIAGKNLYIRFSCSTGDAMGMNMVSKGVQNVLEFLQTDYPDMDVLGISGNFCADKKPAAVNWIEGRGKSVVCEAIIKEEIVKTVLKTEVAALIELNMVKNLAGSAIAGALGGFNAHASNIVSAIFIATGQDPAQNVESSQCITMMEAVNDGKDLHISVTMPSIEVGTVGGGTQLASQSACLNLLGVKGASKDSPGANSRLLATIVAGSVLAGELSLMSAISAGQLVRSHMKYNRSSKDITNIASSQLESDS</sequence>
<gene>
    <name type="primary">HMGR</name>
</gene>